<organism>
    <name type="scientific">Coxiella burnetii (strain Dugway 5J108-111)</name>
    <dbReference type="NCBI Taxonomy" id="434922"/>
    <lineage>
        <taxon>Bacteria</taxon>
        <taxon>Pseudomonadati</taxon>
        <taxon>Pseudomonadota</taxon>
        <taxon>Gammaproteobacteria</taxon>
        <taxon>Legionellales</taxon>
        <taxon>Coxiellaceae</taxon>
        <taxon>Coxiella</taxon>
    </lineage>
</organism>
<keyword id="KW-0067">ATP-binding</keyword>
<keyword id="KW-0143">Chaperone</keyword>
<keyword id="KW-0963">Cytoplasm</keyword>
<keyword id="KW-0413">Isomerase</keyword>
<keyword id="KW-0547">Nucleotide-binding</keyword>
<gene>
    <name evidence="1" type="primary">groEL</name>
    <name evidence="1" type="synonym">groL</name>
    <name type="ordered locus">CBUD_0287</name>
</gene>
<feature type="chain" id="PRO_1000082470" description="Chaperonin GroEL">
    <location>
        <begin position="1"/>
        <end position="552"/>
    </location>
</feature>
<feature type="binding site" evidence="1">
    <location>
        <begin position="30"/>
        <end position="33"/>
    </location>
    <ligand>
        <name>ATP</name>
        <dbReference type="ChEBI" id="CHEBI:30616"/>
    </ligand>
</feature>
<feature type="binding site" evidence="1">
    <location>
        <position position="51"/>
    </location>
    <ligand>
        <name>ATP</name>
        <dbReference type="ChEBI" id="CHEBI:30616"/>
    </ligand>
</feature>
<feature type="binding site" evidence="1">
    <location>
        <begin position="87"/>
        <end position="91"/>
    </location>
    <ligand>
        <name>ATP</name>
        <dbReference type="ChEBI" id="CHEBI:30616"/>
    </ligand>
</feature>
<feature type="binding site" evidence="1">
    <location>
        <position position="415"/>
    </location>
    <ligand>
        <name>ATP</name>
        <dbReference type="ChEBI" id="CHEBI:30616"/>
    </ligand>
</feature>
<feature type="binding site" evidence="1">
    <location>
        <begin position="480"/>
        <end position="482"/>
    </location>
    <ligand>
        <name>ATP</name>
        <dbReference type="ChEBI" id="CHEBI:30616"/>
    </ligand>
</feature>
<feature type="binding site" evidence="1">
    <location>
        <position position="496"/>
    </location>
    <ligand>
        <name>ATP</name>
        <dbReference type="ChEBI" id="CHEBI:30616"/>
    </ligand>
</feature>
<dbReference type="EC" id="5.6.1.7" evidence="1"/>
<dbReference type="EMBL" id="CP000733">
    <property type="protein sequence ID" value="ABS77626.1"/>
    <property type="molecule type" value="Genomic_DNA"/>
</dbReference>
<dbReference type="RefSeq" id="WP_005770500.1">
    <property type="nucleotide sequence ID" value="NC_009727.1"/>
</dbReference>
<dbReference type="SMR" id="A9KC15"/>
<dbReference type="KEGG" id="cbd:CBUD_0287"/>
<dbReference type="HOGENOM" id="CLU_016503_3_0_6"/>
<dbReference type="Proteomes" id="UP000008555">
    <property type="component" value="Chromosome"/>
</dbReference>
<dbReference type="GO" id="GO:0005737">
    <property type="term" value="C:cytoplasm"/>
    <property type="evidence" value="ECO:0007669"/>
    <property type="project" value="UniProtKB-SubCell"/>
</dbReference>
<dbReference type="GO" id="GO:0005524">
    <property type="term" value="F:ATP binding"/>
    <property type="evidence" value="ECO:0007669"/>
    <property type="project" value="UniProtKB-UniRule"/>
</dbReference>
<dbReference type="GO" id="GO:0140662">
    <property type="term" value="F:ATP-dependent protein folding chaperone"/>
    <property type="evidence" value="ECO:0007669"/>
    <property type="project" value="InterPro"/>
</dbReference>
<dbReference type="GO" id="GO:0016853">
    <property type="term" value="F:isomerase activity"/>
    <property type="evidence" value="ECO:0007669"/>
    <property type="project" value="UniProtKB-KW"/>
</dbReference>
<dbReference type="GO" id="GO:0051082">
    <property type="term" value="F:unfolded protein binding"/>
    <property type="evidence" value="ECO:0007669"/>
    <property type="project" value="UniProtKB-UniRule"/>
</dbReference>
<dbReference type="GO" id="GO:0042026">
    <property type="term" value="P:protein refolding"/>
    <property type="evidence" value="ECO:0007669"/>
    <property type="project" value="UniProtKB-UniRule"/>
</dbReference>
<dbReference type="CDD" id="cd03344">
    <property type="entry name" value="GroEL"/>
    <property type="match status" value="1"/>
</dbReference>
<dbReference type="FunFam" id="1.10.560.10:FF:000001">
    <property type="entry name" value="60 kDa chaperonin"/>
    <property type="match status" value="1"/>
</dbReference>
<dbReference type="FunFam" id="3.50.7.10:FF:000001">
    <property type="entry name" value="60 kDa chaperonin"/>
    <property type="match status" value="1"/>
</dbReference>
<dbReference type="Gene3D" id="3.50.7.10">
    <property type="entry name" value="GroEL"/>
    <property type="match status" value="1"/>
</dbReference>
<dbReference type="Gene3D" id="1.10.560.10">
    <property type="entry name" value="GroEL-like equatorial domain"/>
    <property type="match status" value="1"/>
</dbReference>
<dbReference type="Gene3D" id="3.30.260.10">
    <property type="entry name" value="TCP-1-like chaperonin intermediate domain"/>
    <property type="match status" value="1"/>
</dbReference>
<dbReference type="HAMAP" id="MF_00600">
    <property type="entry name" value="CH60"/>
    <property type="match status" value="1"/>
</dbReference>
<dbReference type="InterPro" id="IPR018370">
    <property type="entry name" value="Chaperonin_Cpn60_CS"/>
</dbReference>
<dbReference type="InterPro" id="IPR001844">
    <property type="entry name" value="Cpn60/GroEL"/>
</dbReference>
<dbReference type="InterPro" id="IPR002423">
    <property type="entry name" value="Cpn60/GroEL/TCP-1"/>
</dbReference>
<dbReference type="InterPro" id="IPR027409">
    <property type="entry name" value="GroEL-like_apical_dom_sf"/>
</dbReference>
<dbReference type="InterPro" id="IPR027413">
    <property type="entry name" value="GROEL-like_equatorial_sf"/>
</dbReference>
<dbReference type="InterPro" id="IPR027410">
    <property type="entry name" value="TCP-1-like_intermed_sf"/>
</dbReference>
<dbReference type="NCBIfam" id="TIGR02348">
    <property type="entry name" value="GroEL"/>
    <property type="match status" value="1"/>
</dbReference>
<dbReference type="NCBIfam" id="NF000592">
    <property type="entry name" value="PRK00013.1"/>
    <property type="match status" value="1"/>
</dbReference>
<dbReference type="NCBIfam" id="NF009487">
    <property type="entry name" value="PRK12849.1"/>
    <property type="match status" value="1"/>
</dbReference>
<dbReference type="NCBIfam" id="NF009488">
    <property type="entry name" value="PRK12850.1"/>
    <property type="match status" value="1"/>
</dbReference>
<dbReference type="NCBIfam" id="NF009489">
    <property type="entry name" value="PRK12851.1"/>
    <property type="match status" value="1"/>
</dbReference>
<dbReference type="PANTHER" id="PTHR45633">
    <property type="entry name" value="60 KDA HEAT SHOCK PROTEIN, MITOCHONDRIAL"/>
    <property type="match status" value="1"/>
</dbReference>
<dbReference type="Pfam" id="PF00118">
    <property type="entry name" value="Cpn60_TCP1"/>
    <property type="match status" value="1"/>
</dbReference>
<dbReference type="PRINTS" id="PR00298">
    <property type="entry name" value="CHAPERONIN60"/>
</dbReference>
<dbReference type="SUPFAM" id="SSF52029">
    <property type="entry name" value="GroEL apical domain-like"/>
    <property type="match status" value="1"/>
</dbReference>
<dbReference type="SUPFAM" id="SSF48592">
    <property type="entry name" value="GroEL equatorial domain-like"/>
    <property type="match status" value="1"/>
</dbReference>
<dbReference type="SUPFAM" id="SSF54849">
    <property type="entry name" value="GroEL-intermediate domain like"/>
    <property type="match status" value="1"/>
</dbReference>
<dbReference type="PROSITE" id="PS00296">
    <property type="entry name" value="CHAPERONINS_CPN60"/>
    <property type="match status" value="1"/>
</dbReference>
<protein>
    <recommendedName>
        <fullName evidence="1">Chaperonin GroEL</fullName>
        <ecNumber evidence="1">5.6.1.7</ecNumber>
    </recommendedName>
    <alternativeName>
        <fullName evidence="1">60 kDa chaperonin</fullName>
    </alternativeName>
    <alternativeName>
        <fullName evidence="1">Chaperonin-60</fullName>
        <shortName evidence="1">Cpn60</shortName>
    </alternativeName>
</protein>
<reference key="1">
    <citation type="journal article" date="2009" name="Infect. Immun.">
        <title>Comparative genomics reveal extensive transposon-mediated genomic plasticity and diversity among potential effector proteins within the genus Coxiella.</title>
        <authorList>
            <person name="Beare P.A."/>
            <person name="Unsworth N."/>
            <person name="Andoh M."/>
            <person name="Voth D.E."/>
            <person name="Omsland A."/>
            <person name="Gilk S.D."/>
            <person name="Williams K.P."/>
            <person name="Sobral B.W."/>
            <person name="Kupko J.J. III"/>
            <person name="Porcella S.F."/>
            <person name="Samuel J.E."/>
            <person name="Heinzen R.A."/>
        </authorList>
    </citation>
    <scope>NUCLEOTIDE SEQUENCE [LARGE SCALE GENOMIC DNA]</scope>
    <source>
        <strain>Dugway 5J108-111</strain>
    </source>
</reference>
<proteinExistence type="inferred from homology"/>
<accession>A9KC15</accession>
<sequence>MAAKVLKFSHEVLHAMSRGVEVLANAVKVTLGPKGRNVVLDKSFGAPTITKDGVSVAKEIELEDKFENMGAQMVKEVASRTSDDAGDGTTTATVLAQAILVEGIKAVIAGMNPMDLKRGIDKAVTAAVAELKKISKPCKDQKAIAQVGTISANSDKSIGDIIAEAMEKVGKEGVITVEDGSGLENALEVVEGMQFDRGYLSPYFINNQQNMSAELENPFILLVDKKISNIRELIPLLENVAKSGRPLLVIAEDIEGEALATLVVNNIRGVVKVAAVKAPGFGDRRKAMLQDIAVLTGGKVISEEVGLSLEAASLDDLGSAKRVVVTKDDTTIIDGSGDAGDIKNRVEQIRKEIENSSSDYDKEKLQERLAKLAGGVAVIKVGAATEVEMKEKKARVEDALHATRAAVEEGVVPGGGVALIRVLKSLDSVEVENEDQRVGVEIARRAMAYPLSQIVKNTGVQAAVVADKVLNHKDVNYGYNAATGEYGDMIEMGILDPTKVTRTALQNAASIAGLMITTECMVTEAPKKKEESMPGGGDMGGMGGMGGMGGMM</sequence>
<evidence type="ECO:0000255" key="1">
    <source>
        <dbReference type="HAMAP-Rule" id="MF_00600"/>
    </source>
</evidence>
<comment type="function">
    <text evidence="1">Together with its co-chaperonin GroES, plays an essential role in assisting protein folding. The GroEL-GroES system forms a nano-cage that allows encapsulation of the non-native substrate proteins and provides a physical environment optimized to promote and accelerate protein folding.</text>
</comment>
<comment type="catalytic activity">
    <reaction evidence="1">
        <text>ATP + H2O + a folded polypeptide = ADP + phosphate + an unfolded polypeptide.</text>
        <dbReference type="EC" id="5.6.1.7"/>
    </reaction>
</comment>
<comment type="subunit">
    <text evidence="1">Forms a cylinder of 14 subunits composed of two heptameric rings stacked back-to-back. Interacts with the co-chaperonin GroES.</text>
</comment>
<comment type="subcellular location">
    <subcellularLocation>
        <location evidence="1">Cytoplasm</location>
    </subcellularLocation>
</comment>
<comment type="similarity">
    <text evidence="1">Belongs to the chaperonin (HSP60) family.</text>
</comment>
<name>CH60_COXBN</name>